<feature type="chain" id="PRO_0000074853" description="Sensor-type histidine kinase PrrB">
    <location>
        <begin position="1"/>
        <end position="446"/>
    </location>
</feature>
<feature type="transmembrane region" description="Helical" evidence="2">
    <location>
        <begin position="19"/>
        <end position="39"/>
    </location>
</feature>
<feature type="transmembrane region" description="Helical" evidence="2">
    <location>
        <begin position="151"/>
        <end position="171"/>
    </location>
</feature>
<feature type="domain" description="HAMP" evidence="3">
    <location>
        <begin position="172"/>
        <end position="222"/>
    </location>
</feature>
<feature type="domain" description="Histidine kinase" evidence="4">
    <location>
        <begin position="237"/>
        <end position="446"/>
    </location>
</feature>
<feature type="modified residue" description="Phosphohistidine; by autocatalysis" evidence="4">
    <location>
        <position position="240"/>
    </location>
</feature>
<name>PRRB_MYCLE</name>
<protein>
    <recommendedName>
        <fullName>Sensor-type histidine kinase PrrB</fullName>
        <ecNumber evidence="1">2.7.13.3</ecNumber>
    </recommendedName>
</protein>
<evidence type="ECO:0000250" key="1">
    <source>
        <dbReference type="UniProtKB" id="P9WGK7"/>
    </source>
</evidence>
<evidence type="ECO:0000255" key="2"/>
<evidence type="ECO:0000255" key="3">
    <source>
        <dbReference type="PROSITE-ProRule" id="PRU00102"/>
    </source>
</evidence>
<evidence type="ECO:0000255" key="4">
    <source>
        <dbReference type="PROSITE-ProRule" id="PRU00107"/>
    </source>
</evidence>
<evidence type="ECO:0000305" key="5"/>
<dbReference type="EC" id="2.7.13.3" evidence="1"/>
<dbReference type="EMBL" id="Z99494">
    <property type="protein sequence ID" value="CAB16700.1"/>
    <property type="molecule type" value="Genomic_DNA"/>
</dbReference>
<dbReference type="EMBL" id="AL583924">
    <property type="protein sequence ID" value="CAC31079.1"/>
    <property type="molecule type" value="Genomic_DNA"/>
</dbReference>
<dbReference type="PIR" id="T45358">
    <property type="entry name" value="T45358"/>
</dbReference>
<dbReference type="RefSeq" id="NP_302403.1">
    <property type="nucleotide sequence ID" value="NC_002677.1"/>
</dbReference>
<dbReference type="RefSeq" id="WP_010908723.1">
    <property type="nucleotide sequence ID" value="NC_002677.1"/>
</dbReference>
<dbReference type="SMR" id="O33071"/>
<dbReference type="STRING" id="272631.gene:17575977"/>
<dbReference type="KEGG" id="mle:ML2124"/>
<dbReference type="PATRIC" id="fig|272631.5.peg.4010"/>
<dbReference type="Leproma" id="ML2124"/>
<dbReference type="eggNOG" id="COG2205">
    <property type="taxonomic scope" value="Bacteria"/>
</dbReference>
<dbReference type="HOGENOM" id="CLU_026160_0_0_11"/>
<dbReference type="OrthoDB" id="5241347at2"/>
<dbReference type="Proteomes" id="UP000000806">
    <property type="component" value="Chromosome"/>
</dbReference>
<dbReference type="GO" id="GO:0005886">
    <property type="term" value="C:plasma membrane"/>
    <property type="evidence" value="ECO:0007669"/>
    <property type="project" value="UniProtKB-SubCell"/>
</dbReference>
<dbReference type="GO" id="GO:0005524">
    <property type="term" value="F:ATP binding"/>
    <property type="evidence" value="ECO:0007669"/>
    <property type="project" value="UniProtKB-KW"/>
</dbReference>
<dbReference type="GO" id="GO:0000155">
    <property type="term" value="F:phosphorelay sensor kinase activity"/>
    <property type="evidence" value="ECO:0007669"/>
    <property type="project" value="InterPro"/>
</dbReference>
<dbReference type="CDD" id="cd00075">
    <property type="entry name" value="HATPase"/>
    <property type="match status" value="1"/>
</dbReference>
<dbReference type="CDD" id="cd00082">
    <property type="entry name" value="HisKA"/>
    <property type="match status" value="1"/>
</dbReference>
<dbReference type="Gene3D" id="1.10.287.130">
    <property type="match status" value="1"/>
</dbReference>
<dbReference type="Gene3D" id="6.10.340.10">
    <property type="match status" value="1"/>
</dbReference>
<dbReference type="Gene3D" id="3.30.565.10">
    <property type="entry name" value="Histidine kinase-like ATPase, C-terminal domain"/>
    <property type="match status" value="1"/>
</dbReference>
<dbReference type="InterPro" id="IPR003660">
    <property type="entry name" value="HAMP_dom"/>
</dbReference>
<dbReference type="InterPro" id="IPR036890">
    <property type="entry name" value="HATPase_C_sf"/>
</dbReference>
<dbReference type="InterPro" id="IPR005467">
    <property type="entry name" value="His_kinase_dom"/>
</dbReference>
<dbReference type="InterPro" id="IPR003661">
    <property type="entry name" value="HisK_dim/P_dom"/>
</dbReference>
<dbReference type="InterPro" id="IPR036097">
    <property type="entry name" value="HisK_dim/P_sf"/>
</dbReference>
<dbReference type="InterPro" id="IPR004358">
    <property type="entry name" value="Sig_transdc_His_kin-like_C"/>
</dbReference>
<dbReference type="InterPro" id="IPR050428">
    <property type="entry name" value="TCS_sensor_his_kinase"/>
</dbReference>
<dbReference type="PANTHER" id="PTHR45436:SF5">
    <property type="entry name" value="SENSOR HISTIDINE KINASE TRCS"/>
    <property type="match status" value="1"/>
</dbReference>
<dbReference type="PANTHER" id="PTHR45436">
    <property type="entry name" value="SENSOR HISTIDINE KINASE YKOH"/>
    <property type="match status" value="1"/>
</dbReference>
<dbReference type="Pfam" id="PF00672">
    <property type="entry name" value="HAMP"/>
    <property type="match status" value="1"/>
</dbReference>
<dbReference type="Pfam" id="PF02518">
    <property type="entry name" value="HATPase_c"/>
    <property type="match status" value="1"/>
</dbReference>
<dbReference type="Pfam" id="PF00512">
    <property type="entry name" value="HisKA"/>
    <property type="match status" value="1"/>
</dbReference>
<dbReference type="PRINTS" id="PR00344">
    <property type="entry name" value="BCTRLSENSOR"/>
</dbReference>
<dbReference type="SMART" id="SM00304">
    <property type="entry name" value="HAMP"/>
    <property type="match status" value="1"/>
</dbReference>
<dbReference type="SMART" id="SM00387">
    <property type="entry name" value="HATPase_c"/>
    <property type="match status" value="1"/>
</dbReference>
<dbReference type="SMART" id="SM00388">
    <property type="entry name" value="HisKA"/>
    <property type="match status" value="1"/>
</dbReference>
<dbReference type="SUPFAM" id="SSF55874">
    <property type="entry name" value="ATPase domain of HSP90 chaperone/DNA topoisomerase II/histidine kinase"/>
    <property type="match status" value="1"/>
</dbReference>
<dbReference type="SUPFAM" id="SSF47384">
    <property type="entry name" value="Homodimeric domain of signal transducing histidine kinase"/>
    <property type="match status" value="1"/>
</dbReference>
<dbReference type="PROSITE" id="PS50885">
    <property type="entry name" value="HAMP"/>
    <property type="match status" value="1"/>
</dbReference>
<dbReference type="PROSITE" id="PS50109">
    <property type="entry name" value="HIS_KIN"/>
    <property type="match status" value="1"/>
</dbReference>
<reference key="1">
    <citation type="journal article" date="2001" name="Nature">
        <title>Massive gene decay in the leprosy bacillus.</title>
        <authorList>
            <person name="Cole S.T."/>
            <person name="Eiglmeier K."/>
            <person name="Parkhill J."/>
            <person name="James K.D."/>
            <person name="Thomson N.R."/>
            <person name="Wheeler P.R."/>
            <person name="Honore N."/>
            <person name="Garnier T."/>
            <person name="Churcher C.M."/>
            <person name="Harris D.E."/>
            <person name="Mungall K.L."/>
            <person name="Basham D."/>
            <person name="Brown D."/>
            <person name="Chillingworth T."/>
            <person name="Connor R."/>
            <person name="Davies R.M."/>
            <person name="Devlin K."/>
            <person name="Duthoy S."/>
            <person name="Feltwell T."/>
            <person name="Fraser A."/>
            <person name="Hamlin N."/>
            <person name="Holroyd S."/>
            <person name="Hornsby T."/>
            <person name="Jagels K."/>
            <person name="Lacroix C."/>
            <person name="Maclean J."/>
            <person name="Moule S."/>
            <person name="Murphy L.D."/>
            <person name="Oliver K."/>
            <person name="Quail M.A."/>
            <person name="Rajandream M.A."/>
            <person name="Rutherford K.M."/>
            <person name="Rutter S."/>
            <person name="Seeger K."/>
            <person name="Simon S."/>
            <person name="Simmonds M."/>
            <person name="Skelton J."/>
            <person name="Squares R."/>
            <person name="Squares S."/>
            <person name="Stevens K."/>
            <person name="Taylor K."/>
            <person name="Whitehead S."/>
            <person name="Woodward J.R."/>
            <person name="Barrell B.G."/>
        </authorList>
    </citation>
    <scope>NUCLEOTIDE SEQUENCE [LARGE SCALE GENOMIC DNA]</scope>
    <source>
        <strain>TN</strain>
    </source>
</reference>
<organism>
    <name type="scientific">Mycobacterium leprae (strain TN)</name>
    <dbReference type="NCBI Taxonomy" id="272631"/>
    <lineage>
        <taxon>Bacteria</taxon>
        <taxon>Bacillati</taxon>
        <taxon>Actinomycetota</taxon>
        <taxon>Actinomycetes</taxon>
        <taxon>Mycobacteriales</taxon>
        <taxon>Mycobacteriaceae</taxon>
        <taxon>Mycobacterium</taxon>
    </lineage>
</organism>
<proteinExistence type="inferred from homology"/>
<keyword id="KW-0067">ATP-binding</keyword>
<keyword id="KW-1003">Cell membrane</keyword>
<keyword id="KW-0418">Kinase</keyword>
<keyword id="KW-0472">Membrane</keyword>
<keyword id="KW-0547">Nucleotide-binding</keyword>
<keyword id="KW-0597">Phosphoprotein</keyword>
<keyword id="KW-1185">Reference proteome</keyword>
<keyword id="KW-0808">Transferase</keyword>
<keyword id="KW-0812">Transmembrane</keyword>
<keyword id="KW-1133">Transmembrane helix</keyword>
<keyword id="KW-0902">Two-component regulatory system</keyword>
<comment type="function">
    <text evidence="1">Member of the two-component regulatory system PrrB/PrrA that is involved specifically in early intracellular multiplication of Mycobacterium and is essential for its viability. Functions as a sensor protein kinase which is autophosphorylated at a histidine residue and transfers its phosphate group to the conserved aspartic acid residue in the regulatory domain of PrrA. In turn, PrrA binds to the upstream promoter regions of target genes including itself to positively regulate their expression.</text>
</comment>
<comment type="catalytic activity">
    <reaction evidence="1">
        <text>ATP + protein L-histidine = ADP + protein N-phospho-L-histidine.</text>
        <dbReference type="EC" id="2.7.13.3"/>
    </reaction>
</comment>
<comment type="subcellular location">
    <subcellularLocation>
        <location evidence="5">Cell membrane</location>
        <topology evidence="5">Multi-pass membrane protein</topology>
    </subcellularLocation>
</comment>
<comment type="PTM">
    <text evidence="1">Autophosphorylated.</text>
</comment>
<gene>
    <name type="primary">prrB</name>
    <name type="ordered locus">ML2124</name>
    <name type="ORF">MLCB57.60c</name>
</gene>
<sequence>MNILSRIFARTPSLRTRVVVATAIGAAIPVLIVGTVVWVGITNDRKERLDRKLDEAAGFAIPFVPRGLDEIPRSPNDQDAIITVRRGNLVKSNFDITLPKLTNDYADTYLRGVRYRVRTVEIPAPEPTSIAVGATYDATVAETNNLHRRVLLICGFAIAAAAVFAWLLAAFAVRPFKQLAQQTRSVDAGGEAPRVEVHGATEAVEIAEAMRGMLQRIWNEQNRTKEALASARDFAAVSSHELRTPLTAMRTNLEVLATLDLADDQRKEVLGDVIRTQSRIEATLSALERLAQGELSTSDDHVPVDITELLDRAAHDATRSYPELKVSLVPSPTCIIVGLPAGLRLAVDNAVANAVKHGGATRVQLSAVSSRAGVEIAVDDNGSGVPEDERQVVFERFSRGSTASHSGSGLGLALVAQQAQLHGGTASLETSPLGGARLLLRISAPS</sequence>
<accession>O33071</accession>